<keyword id="KW-1185">Reference proteome</keyword>
<keyword id="KW-0687">Ribonucleoprotein</keyword>
<keyword id="KW-0689">Ribosomal protein</keyword>
<keyword id="KW-0694">RNA-binding</keyword>
<keyword id="KW-0699">rRNA-binding</keyword>
<reference key="1">
    <citation type="journal article" date="2009" name="J. Bacteriol.">
        <title>Complete genome sequence and comparative genome analysis of enteropathogenic Escherichia coli O127:H6 strain E2348/69.</title>
        <authorList>
            <person name="Iguchi A."/>
            <person name="Thomson N.R."/>
            <person name="Ogura Y."/>
            <person name="Saunders D."/>
            <person name="Ooka T."/>
            <person name="Henderson I.R."/>
            <person name="Harris D."/>
            <person name="Asadulghani M."/>
            <person name="Kurokawa K."/>
            <person name="Dean P."/>
            <person name="Kenny B."/>
            <person name="Quail M.A."/>
            <person name="Thurston S."/>
            <person name="Dougan G."/>
            <person name="Hayashi T."/>
            <person name="Parkhill J."/>
            <person name="Frankel G."/>
        </authorList>
    </citation>
    <scope>NUCLEOTIDE SEQUENCE [LARGE SCALE GENOMIC DNA]</scope>
    <source>
        <strain>E2348/69 / EPEC</strain>
    </source>
</reference>
<accession>B7UJ60</accession>
<evidence type="ECO:0000255" key="1">
    <source>
        <dbReference type="HAMAP-Rule" id="MF_01343"/>
    </source>
</evidence>
<evidence type="ECO:0000305" key="2"/>
<gene>
    <name evidence="1" type="primary">rpsO</name>
    <name type="ordered locus">E2348C_3446</name>
</gene>
<proteinExistence type="inferred from homology"/>
<comment type="function">
    <text evidence="1">One of the primary rRNA binding proteins, it binds directly to 16S rRNA where it helps nucleate assembly of the platform of the 30S subunit by binding and bridging several RNA helices of the 16S rRNA.</text>
</comment>
<comment type="function">
    <text evidence="1">Forms an intersubunit bridge (bridge B4) with the 23S rRNA of the 50S subunit in the ribosome.</text>
</comment>
<comment type="subunit">
    <text evidence="1">Part of the 30S ribosomal subunit. Forms a bridge to the 50S subunit in the 70S ribosome, contacting the 23S rRNA.</text>
</comment>
<comment type="similarity">
    <text evidence="1">Belongs to the universal ribosomal protein uS15 family.</text>
</comment>
<organism>
    <name type="scientific">Escherichia coli O127:H6 (strain E2348/69 / EPEC)</name>
    <dbReference type="NCBI Taxonomy" id="574521"/>
    <lineage>
        <taxon>Bacteria</taxon>
        <taxon>Pseudomonadati</taxon>
        <taxon>Pseudomonadota</taxon>
        <taxon>Gammaproteobacteria</taxon>
        <taxon>Enterobacterales</taxon>
        <taxon>Enterobacteriaceae</taxon>
        <taxon>Escherichia</taxon>
    </lineage>
</organism>
<feature type="chain" id="PRO_1000166419" description="Small ribosomal subunit protein uS15">
    <location>
        <begin position="1"/>
        <end position="89"/>
    </location>
</feature>
<name>RS15_ECO27</name>
<protein>
    <recommendedName>
        <fullName evidence="1">Small ribosomal subunit protein uS15</fullName>
    </recommendedName>
    <alternativeName>
        <fullName evidence="2">30S ribosomal protein S15</fullName>
    </alternativeName>
</protein>
<sequence length="89" mass="10269">MSLSTEATAKIVSEFGRDANDTGSTEVQVALLTAQINHLQGHFAEHKKDHHSRRGLLRMVSQRRKLLDYLKRKDVARYTQLIERLGLRR</sequence>
<dbReference type="EMBL" id="FM180568">
    <property type="protein sequence ID" value="CAS10994.1"/>
    <property type="molecule type" value="Genomic_DNA"/>
</dbReference>
<dbReference type="RefSeq" id="WP_000059466.1">
    <property type="nucleotide sequence ID" value="NC_011601.1"/>
</dbReference>
<dbReference type="SMR" id="B7UJ60"/>
<dbReference type="GeneID" id="93778818"/>
<dbReference type="KEGG" id="ecg:E2348C_3446"/>
<dbReference type="HOGENOM" id="CLU_148518_0_0_6"/>
<dbReference type="Proteomes" id="UP000008205">
    <property type="component" value="Chromosome"/>
</dbReference>
<dbReference type="GO" id="GO:0022627">
    <property type="term" value="C:cytosolic small ribosomal subunit"/>
    <property type="evidence" value="ECO:0007669"/>
    <property type="project" value="TreeGrafter"/>
</dbReference>
<dbReference type="GO" id="GO:0019843">
    <property type="term" value="F:rRNA binding"/>
    <property type="evidence" value="ECO:0007669"/>
    <property type="project" value="UniProtKB-UniRule"/>
</dbReference>
<dbReference type="GO" id="GO:0003735">
    <property type="term" value="F:structural constituent of ribosome"/>
    <property type="evidence" value="ECO:0007669"/>
    <property type="project" value="InterPro"/>
</dbReference>
<dbReference type="GO" id="GO:0006412">
    <property type="term" value="P:translation"/>
    <property type="evidence" value="ECO:0007669"/>
    <property type="project" value="UniProtKB-UniRule"/>
</dbReference>
<dbReference type="CDD" id="cd00353">
    <property type="entry name" value="Ribosomal_S15p_S13e"/>
    <property type="match status" value="1"/>
</dbReference>
<dbReference type="FunFam" id="1.10.287.10:FF:000002">
    <property type="entry name" value="30S ribosomal protein S15"/>
    <property type="match status" value="1"/>
</dbReference>
<dbReference type="Gene3D" id="6.10.250.3130">
    <property type="match status" value="1"/>
</dbReference>
<dbReference type="Gene3D" id="1.10.287.10">
    <property type="entry name" value="S15/NS1, RNA-binding"/>
    <property type="match status" value="1"/>
</dbReference>
<dbReference type="HAMAP" id="MF_01343_B">
    <property type="entry name" value="Ribosomal_uS15_B"/>
    <property type="match status" value="1"/>
</dbReference>
<dbReference type="InterPro" id="IPR000589">
    <property type="entry name" value="Ribosomal_uS15"/>
</dbReference>
<dbReference type="InterPro" id="IPR005290">
    <property type="entry name" value="Ribosomal_uS15_bac-type"/>
</dbReference>
<dbReference type="InterPro" id="IPR009068">
    <property type="entry name" value="uS15_NS1_RNA-bd_sf"/>
</dbReference>
<dbReference type="NCBIfam" id="TIGR00952">
    <property type="entry name" value="S15_bact"/>
    <property type="match status" value="1"/>
</dbReference>
<dbReference type="PANTHER" id="PTHR23321">
    <property type="entry name" value="RIBOSOMAL PROTEIN S15, BACTERIAL AND ORGANELLAR"/>
    <property type="match status" value="1"/>
</dbReference>
<dbReference type="PANTHER" id="PTHR23321:SF26">
    <property type="entry name" value="SMALL RIBOSOMAL SUBUNIT PROTEIN US15M"/>
    <property type="match status" value="1"/>
</dbReference>
<dbReference type="Pfam" id="PF00312">
    <property type="entry name" value="Ribosomal_S15"/>
    <property type="match status" value="1"/>
</dbReference>
<dbReference type="SMART" id="SM01387">
    <property type="entry name" value="Ribosomal_S15"/>
    <property type="match status" value="1"/>
</dbReference>
<dbReference type="SUPFAM" id="SSF47060">
    <property type="entry name" value="S15/NS1 RNA-binding domain"/>
    <property type="match status" value="1"/>
</dbReference>
<dbReference type="PROSITE" id="PS00362">
    <property type="entry name" value="RIBOSOMAL_S15"/>
    <property type="match status" value="1"/>
</dbReference>